<dbReference type="EC" id="6.1.1.4" evidence="1"/>
<dbReference type="EMBL" id="CP001407">
    <property type="protein sequence ID" value="ACO27953.1"/>
    <property type="molecule type" value="Genomic_DNA"/>
</dbReference>
<dbReference type="RefSeq" id="WP_000009448.1">
    <property type="nucleotide sequence ID" value="NZ_CP009318.1"/>
</dbReference>
<dbReference type="SMR" id="C1EW09"/>
<dbReference type="GeneID" id="45024607"/>
<dbReference type="KEGG" id="bcx:BCA_4864"/>
<dbReference type="PATRIC" id="fig|572264.18.peg.4812"/>
<dbReference type="Proteomes" id="UP000002210">
    <property type="component" value="Chromosome"/>
</dbReference>
<dbReference type="GO" id="GO:0005829">
    <property type="term" value="C:cytosol"/>
    <property type="evidence" value="ECO:0007669"/>
    <property type="project" value="TreeGrafter"/>
</dbReference>
<dbReference type="GO" id="GO:0002161">
    <property type="term" value="F:aminoacyl-tRNA deacylase activity"/>
    <property type="evidence" value="ECO:0007669"/>
    <property type="project" value="InterPro"/>
</dbReference>
<dbReference type="GO" id="GO:0005524">
    <property type="term" value="F:ATP binding"/>
    <property type="evidence" value="ECO:0007669"/>
    <property type="project" value="UniProtKB-UniRule"/>
</dbReference>
<dbReference type="GO" id="GO:0004823">
    <property type="term" value="F:leucine-tRNA ligase activity"/>
    <property type="evidence" value="ECO:0007669"/>
    <property type="project" value="UniProtKB-UniRule"/>
</dbReference>
<dbReference type="GO" id="GO:0006429">
    <property type="term" value="P:leucyl-tRNA aminoacylation"/>
    <property type="evidence" value="ECO:0007669"/>
    <property type="project" value="UniProtKB-UniRule"/>
</dbReference>
<dbReference type="CDD" id="cd07958">
    <property type="entry name" value="Anticodon_Ia_Leu_BEm"/>
    <property type="match status" value="1"/>
</dbReference>
<dbReference type="CDD" id="cd00812">
    <property type="entry name" value="LeuRS_core"/>
    <property type="match status" value="1"/>
</dbReference>
<dbReference type="FunFam" id="1.10.730.10:FF:000012">
    <property type="entry name" value="Leucine--tRNA ligase"/>
    <property type="match status" value="1"/>
</dbReference>
<dbReference type="FunFam" id="1.10.730.10:FF:000018">
    <property type="entry name" value="Leucine--tRNA ligase"/>
    <property type="match status" value="1"/>
</dbReference>
<dbReference type="FunFam" id="3.10.20.590:FF:000001">
    <property type="entry name" value="Leucine--tRNA ligase"/>
    <property type="match status" value="1"/>
</dbReference>
<dbReference type="FunFam" id="3.40.50.620:FF:000056">
    <property type="entry name" value="Leucine--tRNA ligase"/>
    <property type="match status" value="1"/>
</dbReference>
<dbReference type="FunFam" id="3.40.50.620:FF:000077">
    <property type="entry name" value="Leucine--tRNA ligase"/>
    <property type="match status" value="1"/>
</dbReference>
<dbReference type="Gene3D" id="3.10.20.590">
    <property type="match status" value="1"/>
</dbReference>
<dbReference type="Gene3D" id="3.40.50.620">
    <property type="entry name" value="HUPs"/>
    <property type="match status" value="2"/>
</dbReference>
<dbReference type="Gene3D" id="1.10.730.10">
    <property type="entry name" value="Isoleucyl-tRNA Synthetase, Domain 1"/>
    <property type="match status" value="1"/>
</dbReference>
<dbReference type="HAMAP" id="MF_00049_B">
    <property type="entry name" value="Leu_tRNA_synth_B"/>
    <property type="match status" value="1"/>
</dbReference>
<dbReference type="InterPro" id="IPR001412">
    <property type="entry name" value="aa-tRNA-synth_I_CS"/>
</dbReference>
<dbReference type="InterPro" id="IPR002300">
    <property type="entry name" value="aa-tRNA-synth_Ia"/>
</dbReference>
<dbReference type="InterPro" id="IPR002302">
    <property type="entry name" value="Leu-tRNA-ligase"/>
</dbReference>
<dbReference type="InterPro" id="IPR025709">
    <property type="entry name" value="Leu_tRNA-synth_edit"/>
</dbReference>
<dbReference type="InterPro" id="IPR013155">
    <property type="entry name" value="M/V/L/I-tRNA-synth_anticd-bd"/>
</dbReference>
<dbReference type="InterPro" id="IPR015413">
    <property type="entry name" value="Methionyl/Leucyl_tRNA_Synth"/>
</dbReference>
<dbReference type="InterPro" id="IPR014729">
    <property type="entry name" value="Rossmann-like_a/b/a_fold"/>
</dbReference>
<dbReference type="InterPro" id="IPR009080">
    <property type="entry name" value="tRNAsynth_Ia_anticodon-bd"/>
</dbReference>
<dbReference type="InterPro" id="IPR009008">
    <property type="entry name" value="Val/Leu/Ile-tRNA-synth_edit"/>
</dbReference>
<dbReference type="NCBIfam" id="TIGR00396">
    <property type="entry name" value="leuS_bact"/>
    <property type="match status" value="1"/>
</dbReference>
<dbReference type="PANTHER" id="PTHR43740:SF2">
    <property type="entry name" value="LEUCINE--TRNA LIGASE, MITOCHONDRIAL"/>
    <property type="match status" value="1"/>
</dbReference>
<dbReference type="PANTHER" id="PTHR43740">
    <property type="entry name" value="LEUCYL-TRNA SYNTHETASE"/>
    <property type="match status" value="1"/>
</dbReference>
<dbReference type="Pfam" id="PF08264">
    <property type="entry name" value="Anticodon_1"/>
    <property type="match status" value="1"/>
</dbReference>
<dbReference type="Pfam" id="PF00133">
    <property type="entry name" value="tRNA-synt_1"/>
    <property type="match status" value="1"/>
</dbReference>
<dbReference type="Pfam" id="PF13603">
    <property type="entry name" value="tRNA-synt_1_2"/>
    <property type="match status" value="1"/>
</dbReference>
<dbReference type="Pfam" id="PF09334">
    <property type="entry name" value="tRNA-synt_1g"/>
    <property type="match status" value="1"/>
</dbReference>
<dbReference type="PRINTS" id="PR00985">
    <property type="entry name" value="TRNASYNTHLEU"/>
</dbReference>
<dbReference type="SUPFAM" id="SSF47323">
    <property type="entry name" value="Anticodon-binding domain of a subclass of class I aminoacyl-tRNA synthetases"/>
    <property type="match status" value="1"/>
</dbReference>
<dbReference type="SUPFAM" id="SSF52374">
    <property type="entry name" value="Nucleotidylyl transferase"/>
    <property type="match status" value="1"/>
</dbReference>
<dbReference type="SUPFAM" id="SSF50677">
    <property type="entry name" value="ValRS/IleRS/LeuRS editing domain"/>
    <property type="match status" value="1"/>
</dbReference>
<dbReference type="PROSITE" id="PS00178">
    <property type="entry name" value="AA_TRNA_LIGASE_I"/>
    <property type="match status" value="1"/>
</dbReference>
<evidence type="ECO:0000255" key="1">
    <source>
        <dbReference type="HAMAP-Rule" id="MF_00049"/>
    </source>
</evidence>
<name>SYL_BACC3</name>
<organism>
    <name type="scientific">Bacillus cereus (strain 03BB102)</name>
    <dbReference type="NCBI Taxonomy" id="572264"/>
    <lineage>
        <taxon>Bacteria</taxon>
        <taxon>Bacillati</taxon>
        <taxon>Bacillota</taxon>
        <taxon>Bacilli</taxon>
        <taxon>Bacillales</taxon>
        <taxon>Bacillaceae</taxon>
        <taxon>Bacillus</taxon>
        <taxon>Bacillus cereus group</taxon>
    </lineage>
</organism>
<feature type="chain" id="PRO_1000199175" description="Leucine--tRNA ligase">
    <location>
        <begin position="1"/>
        <end position="802"/>
    </location>
</feature>
<feature type="short sequence motif" description="'HIGH' region">
    <location>
        <begin position="40"/>
        <end position="51"/>
    </location>
</feature>
<feature type="short sequence motif" description="'KMSKS' region">
    <location>
        <begin position="576"/>
        <end position="580"/>
    </location>
</feature>
<feature type="binding site" evidence="1">
    <location>
        <position position="579"/>
    </location>
    <ligand>
        <name>ATP</name>
        <dbReference type="ChEBI" id="CHEBI:30616"/>
    </ligand>
</feature>
<accession>C1EW09</accession>
<comment type="catalytic activity">
    <reaction evidence="1">
        <text>tRNA(Leu) + L-leucine + ATP = L-leucyl-tRNA(Leu) + AMP + diphosphate</text>
        <dbReference type="Rhea" id="RHEA:11688"/>
        <dbReference type="Rhea" id="RHEA-COMP:9613"/>
        <dbReference type="Rhea" id="RHEA-COMP:9622"/>
        <dbReference type="ChEBI" id="CHEBI:30616"/>
        <dbReference type="ChEBI" id="CHEBI:33019"/>
        <dbReference type="ChEBI" id="CHEBI:57427"/>
        <dbReference type="ChEBI" id="CHEBI:78442"/>
        <dbReference type="ChEBI" id="CHEBI:78494"/>
        <dbReference type="ChEBI" id="CHEBI:456215"/>
        <dbReference type="EC" id="6.1.1.4"/>
    </reaction>
</comment>
<comment type="subcellular location">
    <subcellularLocation>
        <location evidence="1">Cytoplasm</location>
    </subcellularLocation>
</comment>
<comment type="similarity">
    <text evidence="1">Belongs to the class-I aminoacyl-tRNA synthetase family.</text>
</comment>
<sequence>MSFNHQEIEKKWQGYWEENKTFRTPDETEKPKFYALDMFPYPSGAGLHVGHPEGYTATDILSRMKRMQGYNVLHPMGWDAFGLPAEQYALDTGNSPAEFTEHNINTFRNQIKSLGFSYDWDREVNTTDPNYYKWTQWIFLKLFEKGLAYVDEVPVNWCPALGTVLANEEIIDGKSERGGHPVERRPMRQWMLKITAYGDRLLEDLDELDWPESLKDMQRNWIGRSEGAEVHFNIDGTDEKFTVFTTRPDTLFGASYCVLAPEHALVADITTADQKEAVEAYINSVKMKSDLERTELAKEKTGVFTGAYAVNPVNGEKLPIWIADYVLATYGTGAVMAVPAHDERDYEFASTFNLPMKEVVKGGDITKEAYTGDGAHVNSAFLDGLNKEEAIAKMIEWLEVTSAGNQKVTYRLRDWLFSRQRYWGEPIPVIHWEDGTMTAVKEEELPLVLPKTENIRPSGTGESPLANIDEWVNVVDPETGKKGRRETNTMPQWAGSCWYYLRYIDPNNSEALVDPEKVKQWLPVDIYIGGAEHAVLHLLYARFWHKVLYDIGVVPTKEPFQQLFNQGMILGENNEKMSKSKGNVVNPDDIVASHGADTLRLYEMFMGPLDASIAWSENGLDGARRFLDRVWRLFVQDNGELSEKITDAPNKDLEKAYHQTVKKVTEDYAELRFNTAISQMMVFINDAYKAETLPKEYVEGFVKMIAPVAPHIGEELWSKLGYNETITYASWPTFDESKLVEDEVEIVVQVMGKVRAKLTMSKDASKDEMEKLALEAIQDQIEGKTVRKVIVVPGKLVNVVAN</sequence>
<proteinExistence type="inferred from homology"/>
<protein>
    <recommendedName>
        <fullName evidence="1">Leucine--tRNA ligase</fullName>
        <ecNumber evidence="1">6.1.1.4</ecNumber>
    </recommendedName>
    <alternativeName>
        <fullName evidence="1">Leucyl-tRNA synthetase</fullName>
        <shortName evidence="1">LeuRS</shortName>
    </alternativeName>
</protein>
<reference key="1">
    <citation type="submission" date="2009-02" db="EMBL/GenBank/DDBJ databases">
        <title>Genome sequence of Bacillus cereus 03BB102.</title>
        <authorList>
            <person name="Dodson R.J."/>
            <person name="Jackson P."/>
            <person name="Munk A.C."/>
            <person name="Brettin T."/>
            <person name="Bruce D."/>
            <person name="Detter C."/>
            <person name="Tapia R."/>
            <person name="Han C."/>
            <person name="Sutton G."/>
            <person name="Sims D."/>
        </authorList>
    </citation>
    <scope>NUCLEOTIDE SEQUENCE [LARGE SCALE GENOMIC DNA]</scope>
    <source>
        <strain>03BB102</strain>
    </source>
</reference>
<keyword id="KW-0030">Aminoacyl-tRNA synthetase</keyword>
<keyword id="KW-0067">ATP-binding</keyword>
<keyword id="KW-0963">Cytoplasm</keyword>
<keyword id="KW-0436">Ligase</keyword>
<keyword id="KW-0547">Nucleotide-binding</keyword>
<keyword id="KW-0648">Protein biosynthesis</keyword>
<gene>
    <name evidence="1" type="primary">leuS</name>
    <name type="ordered locus">BCA_4864</name>
</gene>